<proteinExistence type="inferred from homology"/>
<organism>
    <name type="scientific">Streptococcus mutans serotype c (strain ATCC 700610 / UA159)</name>
    <dbReference type="NCBI Taxonomy" id="210007"/>
    <lineage>
        <taxon>Bacteria</taxon>
        <taxon>Bacillati</taxon>
        <taxon>Bacillota</taxon>
        <taxon>Bacilli</taxon>
        <taxon>Lactobacillales</taxon>
        <taxon>Streptococcaceae</taxon>
        <taxon>Streptococcus</taxon>
    </lineage>
</organism>
<comment type="function">
    <text evidence="1">This protein is involved in the repair of mismatches in DNA. It is required for dam-dependent methyl-directed DNA mismatch repair. May act as a 'molecular matchmaker', a protein that promotes the formation of a stable complex between two or more DNA-binding proteins in an ATP-dependent manner without itself being part of a final effector complex.</text>
</comment>
<comment type="similarity">
    <text evidence="1">Belongs to the DNA mismatch repair MutL/HexB family.</text>
</comment>
<evidence type="ECO:0000255" key="1">
    <source>
        <dbReference type="HAMAP-Rule" id="MF_00149"/>
    </source>
</evidence>
<keyword id="KW-0227">DNA damage</keyword>
<keyword id="KW-0234">DNA repair</keyword>
<keyword id="KW-1185">Reference proteome</keyword>
<accession>Q8DRX0</accession>
<gene>
    <name evidence="1" type="primary">mutL</name>
    <name type="ordered locus">SMU_2089</name>
</gene>
<name>MUTL_STRMU</name>
<reference key="1">
    <citation type="journal article" date="2002" name="Proc. Natl. Acad. Sci. U.S.A.">
        <title>Genome sequence of Streptococcus mutans UA159, a cariogenic dental pathogen.</title>
        <authorList>
            <person name="Ajdic D.J."/>
            <person name="McShan W.M."/>
            <person name="McLaughlin R.E."/>
            <person name="Savic G."/>
            <person name="Chang J."/>
            <person name="Carson M.B."/>
            <person name="Primeaux C."/>
            <person name="Tian R."/>
            <person name="Kenton S."/>
            <person name="Jia H.G."/>
            <person name="Lin S.P."/>
            <person name="Qian Y."/>
            <person name="Li S."/>
            <person name="Zhu H."/>
            <person name="Najar F.Z."/>
            <person name="Lai H."/>
            <person name="White J."/>
            <person name="Roe B.A."/>
            <person name="Ferretti J.J."/>
        </authorList>
    </citation>
    <scope>NUCLEOTIDE SEQUENCE [LARGE SCALE GENOMIC DNA]</scope>
    <source>
        <strain>ATCC 700610 / UA159</strain>
    </source>
</reference>
<feature type="chain" id="PRO_1000010089" description="DNA mismatch repair protein MutL">
    <location>
        <begin position="1"/>
        <end position="651"/>
    </location>
</feature>
<protein>
    <recommendedName>
        <fullName evidence="1">DNA mismatch repair protein MutL</fullName>
    </recommendedName>
</protein>
<dbReference type="EMBL" id="AE014133">
    <property type="protein sequence ID" value="AAN59684.1"/>
    <property type="molecule type" value="Genomic_DNA"/>
</dbReference>
<dbReference type="RefSeq" id="NP_722378.1">
    <property type="nucleotide sequence ID" value="NC_004350.2"/>
</dbReference>
<dbReference type="RefSeq" id="WP_002262396.1">
    <property type="nucleotide sequence ID" value="NC_004350.2"/>
</dbReference>
<dbReference type="SMR" id="Q8DRX0"/>
<dbReference type="STRING" id="210007.SMU_2089"/>
<dbReference type="KEGG" id="smu:SMU_2089"/>
<dbReference type="PATRIC" id="fig|210007.7.peg.1859"/>
<dbReference type="eggNOG" id="COG0323">
    <property type="taxonomic scope" value="Bacteria"/>
</dbReference>
<dbReference type="HOGENOM" id="CLU_004131_4_1_9"/>
<dbReference type="OrthoDB" id="9763467at2"/>
<dbReference type="PhylomeDB" id="Q8DRX0"/>
<dbReference type="Proteomes" id="UP000002512">
    <property type="component" value="Chromosome"/>
</dbReference>
<dbReference type="GO" id="GO:0032300">
    <property type="term" value="C:mismatch repair complex"/>
    <property type="evidence" value="ECO:0007669"/>
    <property type="project" value="InterPro"/>
</dbReference>
<dbReference type="GO" id="GO:0005524">
    <property type="term" value="F:ATP binding"/>
    <property type="evidence" value="ECO:0007669"/>
    <property type="project" value="InterPro"/>
</dbReference>
<dbReference type="GO" id="GO:0016887">
    <property type="term" value="F:ATP hydrolysis activity"/>
    <property type="evidence" value="ECO:0007669"/>
    <property type="project" value="InterPro"/>
</dbReference>
<dbReference type="GO" id="GO:0140664">
    <property type="term" value="F:ATP-dependent DNA damage sensor activity"/>
    <property type="evidence" value="ECO:0007669"/>
    <property type="project" value="InterPro"/>
</dbReference>
<dbReference type="GO" id="GO:0030983">
    <property type="term" value="F:mismatched DNA binding"/>
    <property type="evidence" value="ECO:0007669"/>
    <property type="project" value="InterPro"/>
</dbReference>
<dbReference type="GO" id="GO:0006298">
    <property type="term" value="P:mismatch repair"/>
    <property type="evidence" value="ECO:0007669"/>
    <property type="project" value="UniProtKB-UniRule"/>
</dbReference>
<dbReference type="CDD" id="cd16926">
    <property type="entry name" value="HATPase_MutL-MLH-PMS-like"/>
    <property type="match status" value="1"/>
</dbReference>
<dbReference type="CDD" id="cd00782">
    <property type="entry name" value="MutL_Trans"/>
    <property type="match status" value="1"/>
</dbReference>
<dbReference type="FunFam" id="3.30.1370.100:FF:000004">
    <property type="entry name" value="DNA mismatch repair endonuclease MutL"/>
    <property type="match status" value="1"/>
</dbReference>
<dbReference type="FunFam" id="3.30.230.10:FF:000036">
    <property type="entry name" value="DNA mismatch repair endonuclease MutL"/>
    <property type="match status" value="1"/>
</dbReference>
<dbReference type="FunFam" id="3.30.565.10:FF:000003">
    <property type="entry name" value="DNA mismatch repair endonuclease MutL"/>
    <property type="match status" value="1"/>
</dbReference>
<dbReference type="Gene3D" id="3.30.230.10">
    <property type="match status" value="1"/>
</dbReference>
<dbReference type="Gene3D" id="3.30.565.10">
    <property type="entry name" value="Histidine kinase-like ATPase, C-terminal domain"/>
    <property type="match status" value="1"/>
</dbReference>
<dbReference type="Gene3D" id="3.30.1540.20">
    <property type="entry name" value="MutL, C-terminal domain, dimerisation subdomain"/>
    <property type="match status" value="1"/>
</dbReference>
<dbReference type="Gene3D" id="3.30.1370.100">
    <property type="entry name" value="MutL, C-terminal domain, regulatory subdomain"/>
    <property type="match status" value="1"/>
</dbReference>
<dbReference type="HAMAP" id="MF_00149">
    <property type="entry name" value="DNA_mis_repair"/>
    <property type="match status" value="1"/>
</dbReference>
<dbReference type="InterPro" id="IPR014762">
    <property type="entry name" value="DNA_mismatch_repair_CS"/>
</dbReference>
<dbReference type="InterPro" id="IPR020667">
    <property type="entry name" value="DNA_mismatch_repair_MutL"/>
</dbReference>
<dbReference type="InterPro" id="IPR013507">
    <property type="entry name" value="DNA_mismatch_S5_2-like"/>
</dbReference>
<dbReference type="InterPro" id="IPR036890">
    <property type="entry name" value="HATPase_C_sf"/>
</dbReference>
<dbReference type="InterPro" id="IPR002099">
    <property type="entry name" value="MutL/Mlh/PMS"/>
</dbReference>
<dbReference type="InterPro" id="IPR038973">
    <property type="entry name" value="MutL/Mlh/Pms-like"/>
</dbReference>
<dbReference type="InterPro" id="IPR014790">
    <property type="entry name" value="MutL_C"/>
</dbReference>
<dbReference type="InterPro" id="IPR042120">
    <property type="entry name" value="MutL_C_dimsub"/>
</dbReference>
<dbReference type="InterPro" id="IPR042121">
    <property type="entry name" value="MutL_C_regsub"/>
</dbReference>
<dbReference type="InterPro" id="IPR037198">
    <property type="entry name" value="MutL_C_sf"/>
</dbReference>
<dbReference type="InterPro" id="IPR020568">
    <property type="entry name" value="Ribosomal_Su5_D2-typ_SF"/>
</dbReference>
<dbReference type="InterPro" id="IPR014721">
    <property type="entry name" value="Ribsml_uS5_D2-typ_fold_subgr"/>
</dbReference>
<dbReference type="NCBIfam" id="TIGR00585">
    <property type="entry name" value="mutl"/>
    <property type="match status" value="1"/>
</dbReference>
<dbReference type="NCBIfam" id="NF000950">
    <property type="entry name" value="PRK00095.1-3"/>
    <property type="match status" value="1"/>
</dbReference>
<dbReference type="PANTHER" id="PTHR10073">
    <property type="entry name" value="DNA MISMATCH REPAIR PROTEIN MLH, PMS, MUTL"/>
    <property type="match status" value="1"/>
</dbReference>
<dbReference type="PANTHER" id="PTHR10073:SF12">
    <property type="entry name" value="DNA MISMATCH REPAIR PROTEIN MLH1"/>
    <property type="match status" value="1"/>
</dbReference>
<dbReference type="Pfam" id="PF01119">
    <property type="entry name" value="DNA_mis_repair"/>
    <property type="match status" value="1"/>
</dbReference>
<dbReference type="Pfam" id="PF13589">
    <property type="entry name" value="HATPase_c_3"/>
    <property type="match status" value="1"/>
</dbReference>
<dbReference type="Pfam" id="PF08676">
    <property type="entry name" value="MutL_C"/>
    <property type="match status" value="1"/>
</dbReference>
<dbReference type="SMART" id="SM01340">
    <property type="entry name" value="DNA_mis_repair"/>
    <property type="match status" value="1"/>
</dbReference>
<dbReference type="SMART" id="SM00853">
    <property type="entry name" value="MutL_C"/>
    <property type="match status" value="1"/>
</dbReference>
<dbReference type="SUPFAM" id="SSF55874">
    <property type="entry name" value="ATPase domain of HSP90 chaperone/DNA topoisomerase II/histidine kinase"/>
    <property type="match status" value="1"/>
</dbReference>
<dbReference type="SUPFAM" id="SSF118116">
    <property type="entry name" value="DNA mismatch repair protein MutL"/>
    <property type="match status" value="1"/>
</dbReference>
<dbReference type="SUPFAM" id="SSF54211">
    <property type="entry name" value="Ribosomal protein S5 domain 2-like"/>
    <property type="match status" value="1"/>
</dbReference>
<dbReference type="PROSITE" id="PS00058">
    <property type="entry name" value="DNA_MISMATCH_REPAIR_1"/>
    <property type="match status" value="1"/>
</dbReference>
<sequence length="651" mass="73811">MSKIIELPEVLANQIAAGEVIERPASVVKELVENAIDADSSQITIEIEESGLKKIQVTDNGQGIEQADVIMSLRRHATSKIKKQSDLFRIRTLGFRGEALPSIASISRLTLKTATKGEIYGTLLIANGGKIEKEEAISTPIGTKVSVENLFFNTPARLKYMKSLQAELAHIIDVINRLSLAHPEIAFTLINDGRELTKTAGKGDLRQALAGIYGVTIAKKMVEISNADLDFEVSGYISLPELTRANRNYITILINGRYIKNFLLNRAILDGYGSKLMVGRFPIAVIDIQIDPYLADVNVHPTKQEVRISKEKELMNLVSSAIADSLREQELIPDALENLAKTSTNKKQKFEQTQLPLKQSNLYYDKTQNDFFLKETTVSEASSEFTVVDKAVNITDNVSGHSSVKYAQRQMRTCENKEHPSLTMTDKQQKRQLSRIVESLENEEKSTFPELEYFGQMHGTYLFAQGEGGLYIIDQHAAQERVKYEYYRDKIGEVDNSLQQLLVPYLFEFPANDFMTLQEKMSILNEVGIHLENYGENTFILREHPIWLQEKEIESAVYEMCDMLLLTNEVSIKKYRAELAIMMSCKRSIKANHTLDDYSARNLLIQLSQCKNPYNCPHGRPVLVNFTKADMEKMFRRIQENHTSLRELGKY</sequence>